<gene>
    <name evidence="1" type="primary">rpmB</name>
    <name type="ordered locus">VV1_0824</name>
</gene>
<accession>Q8DDY1</accession>
<sequence length="78" mass="9018">MSRVCQVTGKRPAVGNNRSHARNATKRRFLPNLQTHRFWVESEKRFVKLRLTAKGMRIIDKKGIDVVLADMRARGENV</sequence>
<feature type="chain" id="PRO_0000178587" description="Large ribosomal subunit protein bL28">
    <location>
        <begin position="1"/>
        <end position="78"/>
    </location>
</feature>
<feature type="region of interest" description="Disordered" evidence="2">
    <location>
        <begin position="1"/>
        <end position="25"/>
    </location>
</feature>
<name>RL28_VIBVU</name>
<reference key="1">
    <citation type="submission" date="2002-12" db="EMBL/GenBank/DDBJ databases">
        <title>Complete genome sequence of Vibrio vulnificus CMCP6.</title>
        <authorList>
            <person name="Rhee J.H."/>
            <person name="Kim S.Y."/>
            <person name="Chung S.S."/>
            <person name="Kim J.J."/>
            <person name="Moon Y.H."/>
            <person name="Jeong H."/>
            <person name="Choy H.E."/>
        </authorList>
    </citation>
    <scope>NUCLEOTIDE SEQUENCE [LARGE SCALE GENOMIC DNA]</scope>
    <source>
        <strain>CMCP6</strain>
    </source>
</reference>
<reference key="2">
    <citation type="journal article" date="2011" name="Mol. Syst. Biol.">
        <title>Integrative genome-scale metabolic analysis of Vibrio vulnificus for drug targeting and discovery.</title>
        <authorList>
            <person name="Kim H.U."/>
            <person name="Kim S.Y."/>
            <person name="Jeong H."/>
            <person name="Kim T.Y."/>
            <person name="Kim J.J."/>
            <person name="Choy H.E."/>
            <person name="Yi K.Y."/>
            <person name="Rhee J.H."/>
            <person name="Lee S.Y."/>
        </authorList>
    </citation>
    <scope>SEQUENCE REVISION TO 36</scope>
    <source>
        <strain>CMCP6</strain>
    </source>
</reference>
<keyword id="KW-0687">Ribonucleoprotein</keyword>
<keyword id="KW-0689">Ribosomal protein</keyword>
<proteinExistence type="inferred from homology"/>
<protein>
    <recommendedName>
        <fullName evidence="1">Large ribosomal subunit protein bL28</fullName>
    </recommendedName>
    <alternativeName>
        <fullName evidence="3">50S ribosomal protein L28</fullName>
    </alternativeName>
</protein>
<organism>
    <name type="scientific">Vibrio vulnificus (strain CMCP6)</name>
    <dbReference type="NCBI Taxonomy" id="216895"/>
    <lineage>
        <taxon>Bacteria</taxon>
        <taxon>Pseudomonadati</taxon>
        <taxon>Pseudomonadota</taxon>
        <taxon>Gammaproteobacteria</taxon>
        <taxon>Vibrionales</taxon>
        <taxon>Vibrionaceae</taxon>
        <taxon>Vibrio</taxon>
    </lineage>
</organism>
<comment type="similarity">
    <text evidence="1">Belongs to the bacterial ribosomal protein bL28 family.</text>
</comment>
<dbReference type="EMBL" id="AE016795">
    <property type="protein sequence ID" value="AAO09328.2"/>
    <property type="molecule type" value="Genomic_DNA"/>
</dbReference>
<dbReference type="RefSeq" id="WP_011078894.1">
    <property type="nucleotide sequence ID" value="NC_004459.3"/>
</dbReference>
<dbReference type="SMR" id="Q8DDY1"/>
<dbReference type="GeneID" id="95678426"/>
<dbReference type="KEGG" id="vvu:VV1_0824"/>
<dbReference type="HOGENOM" id="CLU_064548_3_1_6"/>
<dbReference type="Proteomes" id="UP000002275">
    <property type="component" value="Chromosome 1"/>
</dbReference>
<dbReference type="GO" id="GO:0022625">
    <property type="term" value="C:cytosolic large ribosomal subunit"/>
    <property type="evidence" value="ECO:0007669"/>
    <property type="project" value="TreeGrafter"/>
</dbReference>
<dbReference type="GO" id="GO:0003735">
    <property type="term" value="F:structural constituent of ribosome"/>
    <property type="evidence" value="ECO:0007669"/>
    <property type="project" value="InterPro"/>
</dbReference>
<dbReference type="GO" id="GO:0006412">
    <property type="term" value="P:translation"/>
    <property type="evidence" value="ECO:0007669"/>
    <property type="project" value="UniProtKB-UniRule"/>
</dbReference>
<dbReference type="FunFam" id="2.30.170.40:FF:000001">
    <property type="entry name" value="50S ribosomal protein L28"/>
    <property type="match status" value="1"/>
</dbReference>
<dbReference type="Gene3D" id="2.30.170.40">
    <property type="entry name" value="Ribosomal protein L28/L24"/>
    <property type="match status" value="1"/>
</dbReference>
<dbReference type="HAMAP" id="MF_00373">
    <property type="entry name" value="Ribosomal_bL28"/>
    <property type="match status" value="1"/>
</dbReference>
<dbReference type="InterPro" id="IPR026569">
    <property type="entry name" value="Ribosomal_bL28"/>
</dbReference>
<dbReference type="InterPro" id="IPR034704">
    <property type="entry name" value="Ribosomal_bL28/bL31-like_sf"/>
</dbReference>
<dbReference type="InterPro" id="IPR001383">
    <property type="entry name" value="Ribosomal_bL28_bact-type"/>
</dbReference>
<dbReference type="InterPro" id="IPR037147">
    <property type="entry name" value="Ribosomal_bL28_sf"/>
</dbReference>
<dbReference type="NCBIfam" id="TIGR00009">
    <property type="entry name" value="L28"/>
    <property type="match status" value="1"/>
</dbReference>
<dbReference type="PANTHER" id="PTHR13528">
    <property type="entry name" value="39S RIBOSOMAL PROTEIN L28, MITOCHONDRIAL"/>
    <property type="match status" value="1"/>
</dbReference>
<dbReference type="PANTHER" id="PTHR13528:SF2">
    <property type="entry name" value="LARGE RIBOSOMAL SUBUNIT PROTEIN BL28M"/>
    <property type="match status" value="1"/>
</dbReference>
<dbReference type="Pfam" id="PF00830">
    <property type="entry name" value="Ribosomal_L28"/>
    <property type="match status" value="1"/>
</dbReference>
<dbReference type="SUPFAM" id="SSF143800">
    <property type="entry name" value="L28p-like"/>
    <property type="match status" value="1"/>
</dbReference>
<evidence type="ECO:0000255" key="1">
    <source>
        <dbReference type="HAMAP-Rule" id="MF_00373"/>
    </source>
</evidence>
<evidence type="ECO:0000256" key="2">
    <source>
        <dbReference type="SAM" id="MobiDB-lite"/>
    </source>
</evidence>
<evidence type="ECO:0000305" key="3"/>